<accession>Q889R0</accession>
<gene>
    <name evidence="1" type="primary">nrdR</name>
    <name type="ordered locus">PSPTO_0689</name>
</gene>
<protein>
    <recommendedName>
        <fullName evidence="1">Transcriptional repressor NrdR</fullName>
    </recommendedName>
</protein>
<proteinExistence type="inferred from homology"/>
<name>NRDR_PSESM</name>
<sequence length="154" mass="17813">MHCPFCGANDTKVIDSRLVAEGEQVRRRRECLACGERFTTFETAELVLPRLIKQDGSRQPFDEEKLRAGMQRALEKRPVSVERLEAALAHIKHKLRATGEREVKSLVVGELVMGELQKLDEVAYIRFASVYRRFQDLNEFREEIDRLAREPGKE</sequence>
<reference key="1">
    <citation type="journal article" date="2003" name="Proc. Natl. Acad. Sci. U.S.A.">
        <title>The complete genome sequence of the Arabidopsis and tomato pathogen Pseudomonas syringae pv. tomato DC3000.</title>
        <authorList>
            <person name="Buell C.R."/>
            <person name="Joardar V."/>
            <person name="Lindeberg M."/>
            <person name="Selengut J."/>
            <person name="Paulsen I.T."/>
            <person name="Gwinn M.L."/>
            <person name="Dodson R.J."/>
            <person name="DeBoy R.T."/>
            <person name="Durkin A.S."/>
            <person name="Kolonay J.F."/>
            <person name="Madupu R."/>
            <person name="Daugherty S.C."/>
            <person name="Brinkac L.M."/>
            <person name="Beanan M.J."/>
            <person name="Haft D.H."/>
            <person name="Nelson W.C."/>
            <person name="Davidsen T.M."/>
            <person name="Zafar N."/>
            <person name="Zhou L."/>
            <person name="Liu J."/>
            <person name="Yuan Q."/>
            <person name="Khouri H.M."/>
            <person name="Fedorova N.B."/>
            <person name="Tran B."/>
            <person name="Russell D."/>
            <person name="Berry K.J."/>
            <person name="Utterback T.R."/>
            <person name="Van Aken S.E."/>
            <person name="Feldblyum T.V."/>
            <person name="D'Ascenzo M."/>
            <person name="Deng W.-L."/>
            <person name="Ramos A.R."/>
            <person name="Alfano J.R."/>
            <person name="Cartinhour S."/>
            <person name="Chatterjee A.K."/>
            <person name="Delaney T.P."/>
            <person name="Lazarowitz S.G."/>
            <person name="Martin G.B."/>
            <person name="Schneider D.J."/>
            <person name="Tang X."/>
            <person name="Bender C.L."/>
            <person name="White O."/>
            <person name="Fraser C.M."/>
            <person name="Collmer A."/>
        </authorList>
    </citation>
    <scope>NUCLEOTIDE SEQUENCE [LARGE SCALE GENOMIC DNA]</scope>
    <source>
        <strain>ATCC BAA-871 / DC3000</strain>
    </source>
</reference>
<evidence type="ECO:0000255" key="1">
    <source>
        <dbReference type="HAMAP-Rule" id="MF_00440"/>
    </source>
</evidence>
<feature type="chain" id="PRO_0000182336" description="Transcriptional repressor NrdR">
    <location>
        <begin position="1"/>
        <end position="154"/>
    </location>
</feature>
<feature type="domain" description="ATP-cone" evidence="1">
    <location>
        <begin position="49"/>
        <end position="139"/>
    </location>
</feature>
<feature type="zinc finger region" evidence="1">
    <location>
        <begin position="3"/>
        <end position="34"/>
    </location>
</feature>
<organism>
    <name type="scientific">Pseudomonas syringae pv. tomato (strain ATCC BAA-871 / DC3000)</name>
    <dbReference type="NCBI Taxonomy" id="223283"/>
    <lineage>
        <taxon>Bacteria</taxon>
        <taxon>Pseudomonadati</taxon>
        <taxon>Pseudomonadota</taxon>
        <taxon>Gammaproteobacteria</taxon>
        <taxon>Pseudomonadales</taxon>
        <taxon>Pseudomonadaceae</taxon>
        <taxon>Pseudomonas</taxon>
    </lineage>
</organism>
<comment type="function">
    <text evidence="1">Negatively regulates transcription of bacterial ribonucleotide reductase nrd genes and operons by binding to NrdR-boxes.</text>
</comment>
<comment type="cofactor">
    <cofactor evidence="1">
        <name>Zn(2+)</name>
        <dbReference type="ChEBI" id="CHEBI:29105"/>
    </cofactor>
    <text evidence="1">Binds 1 zinc ion.</text>
</comment>
<comment type="similarity">
    <text evidence="1">Belongs to the NrdR family.</text>
</comment>
<keyword id="KW-0067">ATP-binding</keyword>
<keyword id="KW-0238">DNA-binding</keyword>
<keyword id="KW-0479">Metal-binding</keyword>
<keyword id="KW-0547">Nucleotide-binding</keyword>
<keyword id="KW-1185">Reference proteome</keyword>
<keyword id="KW-0678">Repressor</keyword>
<keyword id="KW-0804">Transcription</keyword>
<keyword id="KW-0805">Transcription regulation</keyword>
<keyword id="KW-0862">Zinc</keyword>
<keyword id="KW-0863">Zinc-finger</keyword>
<dbReference type="EMBL" id="AE016853">
    <property type="protein sequence ID" value="AAO54231.1"/>
    <property type="molecule type" value="Genomic_DNA"/>
</dbReference>
<dbReference type="RefSeq" id="NP_790536.1">
    <property type="nucleotide sequence ID" value="NC_004578.1"/>
</dbReference>
<dbReference type="RefSeq" id="WP_003379141.1">
    <property type="nucleotide sequence ID" value="NC_004578.1"/>
</dbReference>
<dbReference type="SMR" id="Q889R0"/>
<dbReference type="STRING" id="223283.PSPTO_0689"/>
<dbReference type="GeneID" id="61791731"/>
<dbReference type="KEGG" id="pst:PSPTO_0689"/>
<dbReference type="PATRIC" id="fig|223283.9.peg.697"/>
<dbReference type="eggNOG" id="COG1327">
    <property type="taxonomic scope" value="Bacteria"/>
</dbReference>
<dbReference type="HOGENOM" id="CLU_108412_0_0_6"/>
<dbReference type="OrthoDB" id="9807461at2"/>
<dbReference type="PhylomeDB" id="Q889R0"/>
<dbReference type="Proteomes" id="UP000002515">
    <property type="component" value="Chromosome"/>
</dbReference>
<dbReference type="GO" id="GO:0005524">
    <property type="term" value="F:ATP binding"/>
    <property type="evidence" value="ECO:0007669"/>
    <property type="project" value="UniProtKB-KW"/>
</dbReference>
<dbReference type="GO" id="GO:0003677">
    <property type="term" value="F:DNA binding"/>
    <property type="evidence" value="ECO:0007669"/>
    <property type="project" value="UniProtKB-KW"/>
</dbReference>
<dbReference type="GO" id="GO:0008270">
    <property type="term" value="F:zinc ion binding"/>
    <property type="evidence" value="ECO:0007669"/>
    <property type="project" value="UniProtKB-UniRule"/>
</dbReference>
<dbReference type="GO" id="GO:0045892">
    <property type="term" value="P:negative regulation of DNA-templated transcription"/>
    <property type="evidence" value="ECO:0007669"/>
    <property type="project" value="UniProtKB-UniRule"/>
</dbReference>
<dbReference type="HAMAP" id="MF_00440">
    <property type="entry name" value="NrdR"/>
    <property type="match status" value="1"/>
</dbReference>
<dbReference type="InterPro" id="IPR005144">
    <property type="entry name" value="ATP-cone_dom"/>
</dbReference>
<dbReference type="InterPro" id="IPR055173">
    <property type="entry name" value="NrdR-like_N"/>
</dbReference>
<dbReference type="InterPro" id="IPR003796">
    <property type="entry name" value="RNR_NrdR-like"/>
</dbReference>
<dbReference type="NCBIfam" id="TIGR00244">
    <property type="entry name" value="transcriptional regulator NrdR"/>
    <property type="match status" value="1"/>
</dbReference>
<dbReference type="PANTHER" id="PTHR30455">
    <property type="entry name" value="TRANSCRIPTIONAL REPRESSOR NRDR"/>
    <property type="match status" value="1"/>
</dbReference>
<dbReference type="PANTHER" id="PTHR30455:SF2">
    <property type="entry name" value="TRANSCRIPTIONAL REPRESSOR NRDR"/>
    <property type="match status" value="1"/>
</dbReference>
<dbReference type="Pfam" id="PF03477">
    <property type="entry name" value="ATP-cone"/>
    <property type="match status" value="1"/>
</dbReference>
<dbReference type="Pfam" id="PF22811">
    <property type="entry name" value="Zn_ribbon_NrdR"/>
    <property type="match status" value="1"/>
</dbReference>
<dbReference type="PROSITE" id="PS51161">
    <property type="entry name" value="ATP_CONE"/>
    <property type="match status" value="1"/>
</dbReference>